<accession>Q84M43</accession>
<accession>A0A0P0W503</accession>
<organism>
    <name type="scientific">Oryza sativa subsp. japonica</name>
    <name type="common">Rice</name>
    <dbReference type="NCBI Taxonomy" id="39947"/>
    <lineage>
        <taxon>Eukaryota</taxon>
        <taxon>Viridiplantae</taxon>
        <taxon>Streptophyta</taxon>
        <taxon>Embryophyta</taxon>
        <taxon>Tracheophyta</taxon>
        <taxon>Spermatophyta</taxon>
        <taxon>Magnoliopsida</taxon>
        <taxon>Liliopsida</taxon>
        <taxon>Poales</taxon>
        <taxon>Poaceae</taxon>
        <taxon>BOP clade</taxon>
        <taxon>Oryzoideae</taxon>
        <taxon>Oryzeae</taxon>
        <taxon>Oryzinae</taxon>
        <taxon>Oryza</taxon>
        <taxon>Oryza sativa</taxon>
    </lineage>
</organism>
<feature type="chain" id="PRO_0000319360" description="Probable cellulose synthase A catalytic subunit 2 [UDP-forming]">
    <location>
        <begin position="1"/>
        <end position="1073"/>
    </location>
</feature>
<feature type="topological domain" description="Cytoplasmic" evidence="3">
    <location>
        <begin position="1"/>
        <end position="270"/>
    </location>
</feature>
<feature type="transmembrane region" description="Helical" evidence="3">
    <location>
        <begin position="271"/>
        <end position="291"/>
    </location>
</feature>
<feature type="topological domain" description="Extracellular" evidence="3">
    <location>
        <begin position="292"/>
        <end position="293"/>
    </location>
</feature>
<feature type="transmembrane region" description="Helical" evidence="3">
    <location>
        <begin position="294"/>
        <end position="314"/>
    </location>
</feature>
<feature type="topological domain" description="Cytoplasmic" evidence="3">
    <location>
        <begin position="315"/>
        <end position="856"/>
    </location>
</feature>
<feature type="transmembrane region" description="Helical" evidence="3">
    <location>
        <begin position="857"/>
        <end position="877"/>
    </location>
</feature>
<feature type="topological domain" description="Extracellular" evidence="3">
    <location>
        <begin position="878"/>
        <end position="882"/>
    </location>
</feature>
<feature type="transmembrane region" description="Helical" evidence="3">
    <location>
        <begin position="883"/>
        <end position="903"/>
    </location>
</feature>
<feature type="topological domain" description="Cytoplasmic" evidence="3">
    <location>
        <begin position="904"/>
        <end position="918"/>
    </location>
</feature>
<feature type="transmembrane region" description="Helical" evidence="3">
    <location>
        <begin position="919"/>
        <end position="939"/>
    </location>
</feature>
<feature type="topological domain" description="Extracellular" evidence="3">
    <location>
        <begin position="940"/>
        <end position="969"/>
    </location>
</feature>
<feature type="transmembrane region" description="Helical" evidence="3">
    <location>
        <begin position="970"/>
        <end position="990"/>
    </location>
</feature>
<feature type="topological domain" description="Cytoplasmic" evidence="3">
    <location>
        <begin position="991"/>
        <end position="1001"/>
    </location>
</feature>
<feature type="transmembrane region" description="Helical" evidence="3">
    <location>
        <begin position="1002"/>
        <end position="1022"/>
    </location>
</feature>
<feature type="topological domain" description="Extracellular" evidence="3">
    <location>
        <begin position="1023"/>
        <end position="1031"/>
    </location>
</feature>
<feature type="transmembrane region" description="Helical" evidence="3">
    <location>
        <begin position="1032"/>
        <end position="1052"/>
    </location>
</feature>
<feature type="topological domain" description="Cytoplasmic" evidence="3">
    <location>
        <begin position="1053"/>
        <end position="1073"/>
    </location>
</feature>
<feature type="zinc finger region" description="RING-type; degenerate">
    <location>
        <begin position="13"/>
        <end position="59"/>
    </location>
</feature>
<feature type="region of interest" description="Disordered" evidence="4">
    <location>
        <begin position="66"/>
        <end position="98"/>
    </location>
</feature>
<feature type="region of interest" description="Disordered" evidence="4">
    <location>
        <begin position="655"/>
        <end position="676"/>
    </location>
</feature>
<feature type="coiled-coil region" evidence="3">
    <location>
        <begin position="443"/>
        <end position="470"/>
    </location>
</feature>
<feature type="compositionally biased region" description="Acidic residues" evidence="4">
    <location>
        <begin position="74"/>
        <end position="85"/>
    </location>
</feature>
<feature type="active site" evidence="3">
    <location>
        <position position="389"/>
    </location>
</feature>
<feature type="active site" evidence="3">
    <location>
        <position position="773"/>
    </location>
</feature>
<feature type="binding site" evidence="2">
    <location>
        <position position="13"/>
    </location>
    <ligand>
        <name>Zn(2+)</name>
        <dbReference type="ChEBI" id="CHEBI:29105"/>
        <label>1</label>
    </ligand>
</feature>
<feature type="binding site" evidence="2">
    <location>
        <position position="16"/>
    </location>
    <ligand>
        <name>Zn(2+)</name>
        <dbReference type="ChEBI" id="CHEBI:29105"/>
        <label>1</label>
    </ligand>
</feature>
<feature type="binding site" evidence="2">
    <location>
        <position position="32"/>
    </location>
    <ligand>
        <name>Zn(2+)</name>
        <dbReference type="ChEBI" id="CHEBI:29105"/>
        <label>2</label>
    </ligand>
</feature>
<feature type="binding site" evidence="2">
    <location>
        <position position="35"/>
    </location>
    <ligand>
        <name>Zn(2+)</name>
        <dbReference type="ChEBI" id="CHEBI:29105"/>
        <label>2</label>
    </ligand>
</feature>
<feature type="binding site" evidence="2">
    <location>
        <position position="40"/>
    </location>
    <ligand>
        <name>Zn(2+)</name>
        <dbReference type="ChEBI" id="CHEBI:29105"/>
        <label>1</label>
    </ligand>
</feature>
<feature type="binding site" evidence="2">
    <location>
        <position position="43"/>
    </location>
    <ligand>
        <name>Zn(2+)</name>
        <dbReference type="ChEBI" id="CHEBI:29105"/>
        <label>1</label>
    </ligand>
</feature>
<feature type="binding site" evidence="2">
    <location>
        <position position="55"/>
    </location>
    <ligand>
        <name>Zn(2+)</name>
        <dbReference type="ChEBI" id="CHEBI:29105"/>
        <label>2</label>
    </ligand>
</feature>
<feature type="binding site" evidence="2">
    <location>
        <position position="58"/>
    </location>
    <ligand>
        <name>Zn(2+)</name>
        <dbReference type="ChEBI" id="CHEBI:29105"/>
        <label>2</label>
    </ligand>
</feature>
<feature type="binding site" evidence="1">
    <location>
        <position position="353"/>
    </location>
    <ligand>
        <name>UDP-alpha-D-glucose</name>
        <dbReference type="ChEBI" id="CHEBI:58885"/>
    </ligand>
</feature>
<feature type="binding site" evidence="1">
    <location>
        <position position="359"/>
    </location>
    <ligand>
        <name>UDP-alpha-D-glucose</name>
        <dbReference type="ChEBI" id="CHEBI:58885"/>
    </ligand>
</feature>
<feature type="binding site" evidence="1">
    <location>
        <position position="360"/>
    </location>
    <ligand>
        <name>UDP-alpha-D-glucose</name>
        <dbReference type="ChEBI" id="CHEBI:58885"/>
    </ligand>
</feature>
<feature type="binding site" evidence="1">
    <location>
        <position position="389"/>
    </location>
    <ligand>
        <name>UDP-alpha-D-glucose</name>
        <dbReference type="ChEBI" id="CHEBI:58885"/>
    </ligand>
</feature>
<feature type="binding site" evidence="1">
    <location>
        <position position="530"/>
    </location>
    <ligand>
        <name>UDP-alpha-D-glucose</name>
        <dbReference type="ChEBI" id="CHEBI:58885"/>
    </ligand>
</feature>
<feature type="binding site" evidence="1">
    <location>
        <position position="531"/>
    </location>
    <ligand>
        <name>Mn(2+)</name>
        <dbReference type="ChEBI" id="CHEBI:29035"/>
    </ligand>
</feature>
<feature type="binding site" evidence="1">
    <location>
        <position position="555"/>
    </location>
    <ligand>
        <name>Mn(2+)</name>
        <dbReference type="ChEBI" id="CHEBI:29035"/>
    </ligand>
</feature>
<feature type="sequence conflict" description="In Ref. 6; AK069196." evidence="5" ref="6">
    <original>K</original>
    <variation>E</variation>
    <location>
        <position position="211"/>
    </location>
</feature>
<proteinExistence type="evidence at transcript level"/>
<protein>
    <recommendedName>
        <fullName>Probable cellulose synthase A catalytic subunit 2 [UDP-forming]</fullName>
        <ecNumber evidence="5">2.4.1.12</ecNumber>
    </recommendedName>
    <alternativeName>
        <fullName>OsCesA2</fullName>
    </alternativeName>
</protein>
<comment type="function">
    <text evidence="2">Probable catalytic subunit of cellulose synthase terminal complexes ('rosettes'), required for beta-1,4-glucan microfibril crystallization, a major mechanism of the cell wall formation.</text>
</comment>
<comment type="catalytic activity">
    <reaction evidence="5">
        <text>[(1-&gt;4)-beta-D-glucosyl](n) + UDP-alpha-D-glucose = [(1-&gt;4)-beta-D-glucosyl](n+1) + UDP + H(+)</text>
        <dbReference type="Rhea" id="RHEA:19929"/>
        <dbReference type="Rhea" id="RHEA-COMP:10033"/>
        <dbReference type="Rhea" id="RHEA-COMP:10034"/>
        <dbReference type="ChEBI" id="CHEBI:15378"/>
        <dbReference type="ChEBI" id="CHEBI:18246"/>
        <dbReference type="ChEBI" id="CHEBI:58223"/>
        <dbReference type="ChEBI" id="CHEBI:58885"/>
        <dbReference type="EC" id="2.4.1.12"/>
    </reaction>
</comment>
<comment type="cofactor">
    <cofactor evidence="1">
        <name>Mn(2+)</name>
        <dbReference type="ChEBI" id="CHEBI:29035"/>
    </cofactor>
</comment>
<comment type="cofactor">
    <cofactor evidence="2">
        <name>Zn(2+)</name>
        <dbReference type="ChEBI" id="CHEBI:29105"/>
    </cofactor>
    <text evidence="2">Binds 2 Zn(2+) ions per subunit.</text>
</comment>
<comment type="pathway">
    <text>Glycan metabolism; plant cellulose biosynthesis.</text>
</comment>
<comment type="subcellular location">
    <subcellularLocation>
        <location evidence="5">Cell membrane</location>
        <topology evidence="5">Multi-pass membrane protein</topology>
    </subcellularLocation>
</comment>
<comment type="similarity">
    <text evidence="5">Belongs to the glycosyltransferase 2 family. Plant cellulose synthase subfamily.</text>
</comment>
<evidence type="ECO:0000250" key="1">
    <source>
        <dbReference type="UniProtKB" id="Q941L0"/>
    </source>
</evidence>
<evidence type="ECO:0000250" key="2">
    <source>
        <dbReference type="UniProtKB" id="Q9SWW6"/>
    </source>
</evidence>
<evidence type="ECO:0000255" key="3"/>
<evidence type="ECO:0000256" key="4">
    <source>
        <dbReference type="SAM" id="MobiDB-lite"/>
    </source>
</evidence>
<evidence type="ECO:0000305" key="5"/>
<reference key="1">
    <citation type="journal article" date="2005" name="Genome Res.">
        <title>Sequence, annotation, and analysis of synteny between rice chromosome 3 and diverged grass species.</title>
        <authorList>
            <consortium name="The rice chromosome 3 sequencing consortium"/>
            <person name="Buell C.R."/>
            <person name="Yuan Q."/>
            <person name="Ouyang S."/>
            <person name="Liu J."/>
            <person name="Zhu W."/>
            <person name="Wang A."/>
            <person name="Maiti R."/>
            <person name="Haas B."/>
            <person name="Wortman J."/>
            <person name="Pertea M."/>
            <person name="Jones K.M."/>
            <person name="Kim M."/>
            <person name="Overton L."/>
            <person name="Tsitrin T."/>
            <person name="Fadrosh D."/>
            <person name="Bera J."/>
            <person name="Weaver B."/>
            <person name="Jin S."/>
            <person name="Johri S."/>
            <person name="Reardon M."/>
            <person name="Webb K."/>
            <person name="Hill J."/>
            <person name="Moffat K."/>
            <person name="Tallon L."/>
            <person name="Van Aken S."/>
            <person name="Lewis M."/>
            <person name="Utterback T."/>
            <person name="Feldblyum T."/>
            <person name="Zismann V."/>
            <person name="Iobst S."/>
            <person name="Hsiao J."/>
            <person name="de Vazeille A.R."/>
            <person name="Salzberg S.L."/>
            <person name="White O."/>
            <person name="Fraser C.M."/>
            <person name="Yu Y."/>
            <person name="Kim H."/>
            <person name="Rambo T."/>
            <person name="Currie J."/>
            <person name="Collura K."/>
            <person name="Kernodle-Thompson S."/>
            <person name="Wei F."/>
            <person name="Kudrna K."/>
            <person name="Ammiraju J.S.S."/>
            <person name="Luo M."/>
            <person name="Goicoechea J.L."/>
            <person name="Wing R.A."/>
            <person name="Henry D."/>
            <person name="Oates R."/>
            <person name="Palmer M."/>
            <person name="Pries G."/>
            <person name="Saski C."/>
            <person name="Simmons J."/>
            <person name="Soderlund C."/>
            <person name="Nelson W."/>
            <person name="de la Bastide M."/>
            <person name="Spiegel L."/>
            <person name="Nascimento L."/>
            <person name="Huang E."/>
            <person name="Preston R."/>
            <person name="Zutavern T."/>
            <person name="Palmer L."/>
            <person name="O'Shaughnessy A."/>
            <person name="Dike S."/>
            <person name="McCombie W.R."/>
            <person name="Minx P."/>
            <person name="Cordum H."/>
            <person name="Wilson R."/>
            <person name="Jin W."/>
            <person name="Lee H.R."/>
            <person name="Jiang J."/>
            <person name="Jackson S."/>
        </authorList>
    </citation>
    <scope>NUCLEOTIDE SEQUENCE [LARGE SCALE GENOMIC DNA]</scope>
    <source>
        <strain>cv. Nipponbare</strain>
    </source>
</reference>
<reference key="2">
    <citation type="journal article" date="2005" name="Nature">
        <title>The map-based sequence of the rice genome.</title>
        <authorList>
            <consortium name="International rice genome sequencing project (IRGSP)"/>
        </authorList>
    </citation>
    <scope>NUCLEOTIDE SEQUENCE [LARGE SCALE GENOMIC DNA]</scope>
    <source>
        <strain>cv. Nipponbare</strain>
    </source>
</reference>
<reference key="3">
    <citation type="journal article" date="2008" name="Nucleic Acids Res.">
        <title>The rice annotation project database (RAP-DB): 2008 update.</title>
        <authorList>
            <consortium name="The rice annotation project (RAP)"/>
        </authorList>
    </citation>
    <scope>GENOME REANNOTATION</scope>
    <source>
        <strain>cv. Nipponbare</strain>
    </source>
</reference>
<reference key="4">
    <citation type="journal article" date="2013" name="Rice">
        <title>Improvement of the Oryza sativa Nipponbare reference genome using next generation sequence and optical map data.</title>
        <authorList>
            <person name="Kawahara Y."/>
            <person name="de la Bastide M."/>
            <person name="Hamilton J.P."/>
            <person name="Kanamori H."/>
            <person name="McCombie W.R."/>
            <person name="Ouyang S."/>
            <person name="Schwartz D.C."/>
            <person name="Tanaka T."/>
            <person name="Wu J."/>
            <person name="Zhou S."/>
            <person name="Childs K.L."/>
            <person name="Davidson R.M."/>
            <person name="Lin H."/>
            <person name="Quesada-Ocampo L."/>
            <person name="Vaillancourt B."/>
            <person name="Sakai H."/>
            <person name="Lee S.S."/>
            <person name="Kim J."/>
            <person name="Numa H."/>
            <person name="Itoh T."/>
            <person name="Buell C.R."/>
            <person name="Matsumoto T."/>
        </authorList>
    </citation>
    <scope>GENOME REANNOTATION</scope>
    <source>
        <strain>cv. Nipponbare</strain>
    </source>
</reference>
<reference key="5">
    <citation type="journal article" date="2005" name="PLoS Biol.">
        <title>The genomes of Oryza sativa: a history of duplications.</title>
        <authorList>
            <person name="Yu J."/>
            <person name="Wang J."/>
            <person name="Lin W."/>
            <person name="Li S."/>
            <person name="Li H."/>
            <person name="Zhou J."/>
            <person name="Ni P."/>
            <person name="Dong W."/>
            <person name="Hu S."/>
            <person name="Zeng C."/>
            <person name="Zhang J."/>
            <person name="Zhang Y."/>
            <person name="Li R."/>
            <person name="Xu Z."/>
            <person name="Li S."/>
            <person name="Li X."/>
            <person name="Zheng H."/>
            <person name="Cong L."/>
            <person name="Lin L."/>
            <person name="Yin J."/>
            <person name="Geng J."/>
            <person name="Li G."/>
            <person name="Shi J."/>
            <person name="Liu J."/>
            <person name="Lv H."/>
            <person name="Li J."/>
            <person name="Wang J."/>
            <person name="Deng Y."/>
            <person name="Ran L."/>
            <person name="Shi X."/>
            <person name="Wang X."/>
            <person name="Wu Q."/>
            <person name="Li C."/>
            <person name="Ren X."/>
            <person name="Wang J."/>
            <person name="Wang X."/>
            <person name="Li D."/>
            <person name="Liu D."/>
            <person name="Zhang X."/>
            <person name="Ji Z."/>
            <person name="Zhao W."/>
            <person name="Sun Y."/>
            <person name="Zhang Z."/>
            <person name="Bao J."/>
            <person name="Han Y."/>
            <person name="Dong L."/>
            <person name="Ji J."/>
            <person name="Chen P."/>
            <person name="Wu S."/>
            <person name="Liu J."/>
            <person name="Xiao Y."/>
            <person name="Bu D."/>
            <person name="Tan J."/>
            <person name="Yang L."/>
            <person name="Ye C."/>
            <person name="Zhang J."/>
            <person name="Xu J."/>
            <person name="Zhou Y."/>
            <person name="Yu Y."/>
            <person name="Zhang B."/>
            <person name="Zhuang S."/>
            <person name="Wei H."/>
            <person name="Liu B."/>
            <person name="Lei M."/>
            <person name="Yu H."/>
            <person name="Li Y."/>
            <person name="Xu H."/>
            <person name="Wei S."/>
            <person name="He X."/>
            <person name="Fang L."/>
            <person name="Zhang Z."/>
            <person name="Zhang Y."/>
            <person name="Huang X."/>
            <person name="Su Z."/>
            <person name="Tong W."/>
            <person name="Li J."/>
            <person name="Tong Z."/>
            <person name="Li S."/>
            <person name="Ye J."/>
            <person name="Wang L."/>
            <person name="Fang L."/>
            <person name="Lei T."/>
            <person name="Chen C.-S."/>
            <person name="Chen H.-C."/>
            <person name="Xu Z."/>
            <person name="Li H."/>
            <person name="Huang H."/>
            <person name="Zhang F."/>
            <person name="Xu H."/>
            <person name="Li N."/>
            <person name="Zhao C."/>
            <person name="Li S."/>
            <person name="Dong L."/>
            <person name="Huang Y."/>
            <person name="Li L."/>
            <person name="Xi Y."/>
            <person name="Qi Q."/>
            <person name="Li W."/>
            <person name="Zhang B."/>
            <person name="Hu W."/>
            <person name="Zhang Y."/>
            <person name="Tian X."/>
            <person name="Jiao Y."/>
            <person name="Liang X."/>
            <person name="Jin J."/>
            <person name="Gao L."/>
            <person name="Zheng W."/>
            <person name="Hao B."/>
            <person name="Liu S.-M."/>
            <person name="Wang W."/>
            <person name="Yuan L."/>
            <person name="Cao M."/>
            <person name="McDermott J."/>
            <person name="Samudrala R."/>
            <person name="Wang J."/>
            <person name="Wong G.K.-S."/>
            <person name="Yang H."/>
        </authorList>
    </citation>
    <scope>NUCLEOTIDE SEQUENCE [LARGE SCALE GENOMIC DNA]</scope>
    <source>
        <strain>cv. Nipponbare</strain>
    </source>
</reference>
<reference key="6">
    <citation type="journal article" date="2003" name="Science">
        <title>Collection, mapping, and annotation of over 28,000 cDNA clones from japonica rice.</title>
        <authorList>
            <consortium name="The rice full-length cDNA consortium"/>
        </authorList>
    </citation>
    <scope>NUCLEOTIDE SEQUENCE [LARGE SCALE MRNA]</scope>
    <source>
        <strain>cv. Nipponbare</strain>
    </source>
</reference>
<sequence>MDGAKSGKQCHVCQICGDGVGTAADGELFTACDVCGFPVCRPCYEYERKDGSQACPQCKTKYKRHKGSPPILGDESDDVDADDASDVNYPTSGNQDHKHKIAERMLTWRMNSGRNDDIVHSKYDSGEIGHPKYDSGEIPRIYIPSLTHSQISGEIPGASPDHMMSPVGNIGRRGHPFPYVNHSPNPSREFSGSLGNVAWKERVDGWKMKDKGAIPMANGTSIAPSEGRGVGDIDASTDYNMEDALLNDETRQPLSRKVPISSSRINPYRMVIVLRLIVLCIFLHYRITNPVRNAYPLWLLSVICEIWFALSWILDQFPKWSPINRETYLDRLALRYDREGEPSQLAPVDIFVSTVDPMKEPPLVTANTVLSILAVDYPVDKVSCYVSDDGAAMLTFDALAETSEFARKWVPFCKKYSIEPRAPEWYFAQKIDYLKDKVQASFVKDRRAMKREYEEFKVRVNALVAKAQKVPEEGWIMQDGTPWPGNNTRDHPGMIQVFLGHSGGLDTEGNELPRLVYVSREKRPGFQHHKKAGAMNALVRVSAVLTNGQYLLNLDCDHYINNSKALREAMCFLMDPNLGRRVCYVQFPQRFDGIDRNDRYANRNTVFFDINLRGLDGLQGPVYVGTGCVFNRTALYGYEPPIKQKRPGYFSSLCGGRKKTKKSKEKSTEKKKSHKHVDSSVPVFNLEDIEEGIEGSGFDDEKSLLMSQMSLEKRFGQSSVFVASTLMEYGGVPQSATPESLLKEAIHVISCGYEDKSDWGTEIGWIYGSVTEDILTGFKMHARGWRSIYCMPKRPAFKGSAPINLSDRLNQVLRWALGSVEILFSRHCPIWYGYGGRLKFLERFAYINTTIYPLTSIPLLLYCILPAICLLTGKFIIPEISNFASIWFISLFLSIFATGILEMRWSGVGIDEWWRNEQFWVIGGISAHLFAVFQGLLKVLAGIDTSFTVTSKASDEEGDFAELYMFKWTTLLIPPTTILIINLVGVVAGISYAINSGYQSWGPLFGKLFFAFWVIVHLYPFLKGLMGRQNRTPTIVVVWAILLASIFSLLWVRIDPFTTRVTGPDTQKCGINC</sequence>
<dbReference type="EC" id="2.4.1.12" evidence="5"/>
<dbReference type="EMBL" id="AC135958">
    <property type="protein sequence ID" value="AAP21426.1"/>
    <property type="molecule type" value="Genomic_DNA"/>
</dbReference>
<dbReference type="EMBL" id="AC145384">
    <property type="protein sequence ID" value="AAS07381.1"/>
    <property type="molecule type" value="Genomic_DNA"/>
</dbReference>
<dbReference type="EMBL" id="DP000009">
    <property type="protein sequence ID" value="ABF99460.1"/>
    <property type="molecule type" value="Genomic_DNA"/>
</dbReference>
<dbReference type="EMBL" id="AP008209">
    <property type="protein sequence ID" value="BAF13562.1"/>
    <property type="molecule type" value="Genomic_DNA"/>
</dbReference>
<dbReference type="EMBL" id="AP014959">
    <property type="protein sequence ID" value="BAS86968.1"/>
    <property type="molecule type" value="Genomic_DNA"/>
</dbReference>
<dbReference type="EMBL" id="CM000140">
    <property type="protein sequence ID" value="EAZ28997.1"/>
    <property type="molecule type" value="Genomic_DNA"/>
</dbReference>
<dbReference type="EMBL" id="AK069196">
    <property type="status" value="NOT_ANNOTATED_CDS"/>
    <property type="molecule type" value="mRNA"/>
</dbReference>
<dbReference type="RefSeq" id="XP_015630545.1">
    <property type="nucleotide sequence ID" value="XM_015775059.1"/>
</dbReference>
<dbReference type="SMR" id="Q84M43"/>
<dbReference type="FunCoup" id="Q84M43">
    <property type="interactions" value="1110"/>
</dbReference>
<dbReference type="STRING" id="39947.Q84M43"/>
<dbReference type="CAZy" id="GT2">
    <property type="family name" value="Glycosyltransferase Family 2"/>
</dbReference>
<dbReference type="PaxDb" id="39947-Q84M43"/>
<dbReference type="EnsemblPlants" id="Os03t0808100-01">
    <property type="protein sequence ID" value="Os03t0808100-01"/>
    <property type="gene ID" value="Os03g0808100"/>
</dbReference>
<dbReference type="Gramene" id="Os03t0808100-01">
    <property type="protein sequence ID" value="Os03t0808100-01"/>
    <property type="gene ID" value="Os03g0808100"/>
</dbReference>
<dbReference type="KEGG" id="dosa:Os03g0808100"/>
<dbReference type="eggNOG" id="ENOG502QSUQ">
    <property type="taxonomic scope" value="Eukaryota"/>
</dbReference>
<dbReference type="HOGENOM" id="CLU_001418_0_1_1"/>
<dbReference type="InParanoid" id="Q84M43"/>
<dbReference type="OMA" id="RPCYEFE"/>
<dbReference type="OrthoDB" id="72851at2759"/>
<dbReference type="PlantReactome" id="R-OSA-1119314">
    <property type="pathway name" value="Cellulose biosynthesis"/>
</dbReference>
<dbReference type="UniPathway" id="UPA00695"/>
<dbReference type="Proteomes" id="UP000000763">
    <property type="component" value="Chromosome 3"/>
</dbReference>
<dbReference type="Proteomes" id="UP000007752">
    <property type="component" value="Chromosome 3"/>
</dbReference>
<dbReference type="Proteomes" id="UP000059680">
    <property type="component" value="Chromosome 3"/>
</dbReference>
<dbReference type="ExpressionAtlas" id="Q84M43">
    <property type="expression patterns" value="baseline and differential"/>
</dbReference>
<dbReference type="GO" id="GO:0005886">
    <property type="term" value="C:plasma membrane"/>
    <property type="evidence" value="ECO:0000318"/>
    <property type="project" value="GO_Central"/>
</dbReference>
<dbReference type="GO" id="GO:0016760">
    <property type="term" value="F:cellulose synthase (UDP-forming) activity"/>
    <property type="evidence" value="ECO:0007669"/>
    <property type="project" value="UniProtKB-EC"/>
</dbReference>
<dbReference type="GO" id="GO:0016759">
    <property type="term" value="F:cellulose synthase activity"/>
    <property type="evidence" value="ECO:0000318"/>
    <property type="project" value="GO_Central"/>
</dbReference>
<dbReference type="GO" id="GO:0008270">
    <property type="term" value="F:zinc ion binding"/>
    <property type="evidence" value="ECO:0007669"/>
    <property type="project" value="UniProtKB-KW"/>
</dbReference>
<dbReference type="GO" id="GO:0071555">
    <property type="term" value="P:cell wall organization"/>
    <property type="evidence" value="ECO:0007669"/>
    <property type="project" value="UniProtKB-KW"/>
</dbReference>
<dbReference type="GO" id="GO:0030244">
    <property type="term" value="P:cellulose biosynthetic process"/>
    <property type="evidence" value="ECO:0000318"/>
    <property type="project" value="GO_Central"/>
</dbReference>
<dbReference type="GO" id="GO:0009833">
    <property type="term" value="P:plant-type primary cell wall biogenesis"/>
    <property type="evidence" value="ECO:0000318"/>
    <property type="project" value="GO_Central"/>
</dbReference>
<dbReference type="CDD" id="cd16617">
    <property type="entry name" value="mRING-HC-C4C4_CesA"/>
    <property type="match status" value="1"/>
</dbReference>
<dbReference type="FunFam" id="3.90.550.10:FF:000009">
    <property type="entry name" value="Cellulose synthase"/>
    <property type="match status" value="1"/>
</dbReference>
<dbReference type="Gene3D" id="3.90.550.10">
    <property type="entry name" value="Spore Coat Polysaccharide Biosynthesis Protein SpsA, Chain A"/>
    <property type="match status" value="1"/>
</dbReference>
<dbReference type="Gene3D" id="3.30.40.10">
    <property type="entry name" value="Zinc/RING finger domain, C3HC4 (zinc finger)"/>
    <property type="match status" value="1"/>
</dbReference>
<dbReference type="InterPro" id="IPR005150">
    <property type="entry name" value="Cellulose_synth"/>
</dbReference>
<dbReference type="InterPro" id="IPR027934">
    <property type="entry name" value="CES_Znf_RING"/>
</dbReference>
<dbReference type="InterPro" id="IPR029044">
    <property type="entry name" value="Nucleotide-diphossugar_trans"/>
</dbReference>
<dbReference type="InterPro" id="IPR013083">
    <property type="entry name" value="Znf_RING/FYVE/PHD"/>
</dbReference>
<dbReference type="PANTHER" id="PTHR13301">
    <property type="entry name" value="X-BOX TRANSCRIPTION FACTOR-RELATED"/>
    <property type="match status" value="1"/>
</dbReference>
<dbReference type="Pfam" id="PF03552">
    <property type="entry name" value="Cellulose_synt"/>
    <property type="match status" value="1"/>
</dbReference>
<dbReference type="Pfam" id="PF14569">
    <property type="entry name" value="zf-UDP"/>
    <property type="match status" value="1"/>
</dbReference>
<dbReference type="SUPFAM" id="SSF53448">
    <property type="entry name" value="Nucleotide-diphospho-sugar transferases"/>
    <property type="match status" value="1"/>
</dbReference>
<dbReference type="SUPFAM" id="SSF57850">
    <property type="entry name" value="RING/U-box"/>
    <property type="match status" value="1"/>
</dbReference>
<gene>
    <name type="primary">CESA2</name>
    <name type="ordered locus">Os03g0808100</name>
    <name type="ordered locus">LOC_Os03g59340</name>
    <name type="ORF">OsJ_012480</name>
    <name type="ORF">OSJNBa0059E14.5</name>
    <name type="ORF">OSJNBa0060M17.2</name>
</gene>
<name>CESA2_ORYSJ</name>
<keyword id="KW-1003">Cell membrane</keyword>
<keyword id="KW-0961">Cell wall biogenesis/degradation</keyword>
<keyword id="KW-0135">Cellulose biosynthesis</keyword>
<keyword id="KW-0175">Coiled coil</keyword>
<keyword id="KW-0328">Glycosyltransferase</keyword>
<keyword id="KW-0464">Manganese</keyword>
<keyword id="KW-0472">Membrane</keyword>
<keyword id="KW-0479">Metal-binding</keyword>
<keyword id="KW-1185">Reference proteome</keyword>
<keyword id="KW-0808">Transferase</keyword>
<keyword id="KW-0812">Transmembrane</keyword>
<keyword id="KW-1133">Transmembrane helix</keyword>
<keyword id="KW-0862">Zinc</keyword>
<keyword id="KW-0863">Zinc-finger</keyword>